<reference key="1">
    <citation type="journal article" date="1995" name="Science">
        <title>Whole-genome random sequencing and assembly of Haemophilus influenzae Rd.</title>
        <authorList>
            <person name="Fleischmann R.D."/>
            <person name="Adams M.D."/>
            <person name="White O."/>
            <person name="Clayton R.A."/>
            <person name="Kirkness E.F."/>
            <person name="Kerlavage A.R."/>
            <person name="Bult C.J."/>
            <person name="Tomb J.-F."/>
            <person name="Dougherty B.A."/>
            <person name="Merrick J.M."/>
            <person name="McKenney K."/>
            <person name="Sutton G.G."/>
            <person name="FitzHugh W."/>
            <person name="Fields C.A."/>
            <person name="Gocayne J.D."/>
            <person name="Scott J.D."/>
            <person name="Shirley R."/>
            <person name="Liu L.-I."/>
            <person name="Glodek A."/>
            <person name="Kelley J.M."/>
            <person name="Weidman J.F."/>
            <person name="Phillips C.A."/>
            <person name="Spriggs T."/>
            <person name="Hedblom E."/>
            <person name="Cotton M.D."/>
            <person name="Utterback T.R."/>
            <person name="Hanna M.C."/>
            <person name="Nguyen D.T."/>
            <person name="Saudek D.M."/>
            <person name="Brandon R.C."/>
            <person name="Fine L.D."/>
            <person name="Fritchman J.L."/>
            <person name="Fuhrmann J.L."/>
            <person name="Geoghagen N.S.M."/>
            <person name="Gnehm C.L."/>
            <person name="McDonald L.A."/>
            <person name="Small K.V."/>
            <person name="Fraser C.M."/>
            <person name="Smith H.O."/>
            <person name="Venter J.C."/>
        </authorList>
    </citation>
    <scope>NUCLEOTIDE SEQUENCE [LARGE SCALE GENOMIC DNA]</scope>
    <source>
        <strain>ATCC 51907 / DSM 11121 / KW20 / Rd</strain>
    </source>
</reference>
<reference key="2">
    <citation type="journal article" date="2000" name="Electrophoresis">
        <title>Two-dimensional map of the proteome of Haemophilus influenzae.</title>
        <authorList>
            <person name="Langen H."/>
            <person name="Takacs B."/>
            <person name="Evers S."/>
            <person name="Berndt P."/>
            <person name="Lahm H.W."/>
            <person name="Wipf B."/>
            <person name="Gray C."/>
            <person name="Fountoulakis M."/>
        </authorList>
    </citation>
    <scope>PROTEIN SEQUENCE OF 76-80</scope>
    <source>
        <strain>ATCC 51907 / DSM 11121 / KW20 / Rd</strain>
    </source>
</reference>
<feature type="chain" id="PRO_0000217271" description="Endoribonuclease VapD">
    <location>
        <begin position="1"/>
        <end position="91"/>
    </location>
</feature>
<organism>
    <name type="scientific">Haemophilus influenzae (strain ATCC 51907 / DSM 11121 / KW20 / Rd)</name>
    <dbReference type="NCBI Taxonomy" id="71421"/>
    <lineage>
        <taxon>Bacteria</taxon>
        <taxon>Pseudomonadati</taxon>
        <taxon>Pseudomonadota</taxon>
        <taxon>Gammaproteobacteria</taxon>
        <taxon>Pasteurellales</taxon>
        <taxon>Pasteurellaceae</taxon>
        <taxon>Haemophilus</taxon>
    </lineage>
</organism>
<sequence>MYAIAFLVVKDTQDYHPKGVQQAYTDIGAVLAKFGFVRTQGSLYINMNEDMANLFQAMNALKQLAWISQSVRDIRAFRIEQWSDFTDFIRN</sequence>
<accession>P71351</accession>
<proteinExistence type="evidence at protein level"/>
<comment type="function">
    <text evidence="1">Cleaves ssRNA, mostly between U:A.</text>
</comment>
<comment type="subunit">
    <text evidence="1">Homodimer.</text>
</comment>
<comment type="similarity">
    <text evidence="2">Belongs to the VapD ribonuclease family.</text>
</comment>
<evidence type="ECO:0000250" key="1"/>
<evidence type="ECO:0000305" key="2"/>
<name>VAPD_HAEIN</name>
<keyword id="KW-0903">Direct protein sequencing</keyword>
<keyword id="KW-0378">Hydrolase</keyword>
<keyword id="KW-0540">Nuclease</keyword>
<keyword id="KW-1185">Reference proteome</keyword>
<keyword id="KW-0843">Virulence</keyword>
<gene>
    <name type="primary">vapD</name>
    <name type="ordered locus">HI_0450</name>
</gene>
<dbReference type="EC" id="3.1.-.-"/>
<dbReference type="EMBL" id="L42023">
    <property type="protein sequence ID" value="AAC22108.1"/>
    <property type="molecule type" value="Genomic_DNA"/>
</dbReference>
<dbReference type="PIR" id="C64069">
    <property type="entry name" value="C64069"/>
</dbReference>
<dbReference type="RefSeq" id="NP_438611.1">
    <property type="nucleotide sequence ID" value="NC_000907.1"/>
</dbReference>
<dbReference type="SMR" id="P71351"/>
<dbReference type="STRING" id="71421.HI_0450"/>
<dbReference type="EnsemblBacteria" id="AAC22108">
    <property type="protein sequence ID" value="AAC22108"/>
    <property type="gene ID" value="HI_0450"/>
</dbReference>
<dbReference type="KEGG" id="hin:HI_0450"/>
<dbReference type="PATRIC" id="fig|71421.8.peg.470"/>
<dbReference type="eggNOG" id="COG3309">
    <property type="taxonomic scope" value="Bacteria"/>
</dbReference>
<dbReference type="HOGENOM" id="CLU_145265_4_0_6"/>
<dbReference type="OrthoDB" id="8611858at2"/>
<dbReference type="BioCyc" id="HINF71421:G1GJ1-466-MONOMER"/>
<dbReference type="Proteomes" id="UP000000579">
    <property type="component" value="Chromosome"/>
</dbReference>
<dbReference type="GO" id="GO:0004518">
    <property type="term" value="F:nuclease activity"/>
    <property type="evidence" value="ECO:0007669"/>
    <property type="project" value="UniProtKB-KW"/>
</dbReference>
<dbReference type="GO" id="GO:0003723">
    <property type="term" value="F:RNA binding"/>
    <property type="evidence" value="ECO:0007669"/>
    <property type="project" value="InterPro"/>
</dbReference>
<dbReference type="Gene3D" id="3.30.70.240">
    <property type="match status" value="1"/>
</dbReference>
<dbReference type="InterPro" id="IPR016368">
    <property type="entry name" value="VapD"/>
</dbReference>
<dbReference type="PIRSF" id="PIRSF002882">
    <property type="entry name" value="VapD"/>
    <property type="match status" value="1"/>
</dbReference>
<protein>
    <recommendedName>
        <fullName>Endoribonuclease VapD</fullName>
        <ecNumber>3.1.-.-</ecNumber>
    </recommendedName>
    <alternativeName>
        <fullName>Virulence-associated protein D</fullName>
    </alternativeName>
</protein>